<sequence>MIEPHGGKLVNKIATEEEKNEWLNKSKELKSISVTYFDLSELENIATGLFSPLEGFMTKEDYDSVLNSMRLSNGTVWSIPIILSVKKEIADELKVGEDVLIKNQEDSKEYAILHLQEKFERRKEEEALKVYKTQDKAHPGVKFLYEQGEIALGGEITLLNRIEHENFQEFRFDPKDTRKIFSEKGWKTIVAFQTRNPIHRAHEYLQKTALEIVDGLFLNPLVGKTKDEDIPSDVRMKSYEVILDKYYPKERVFLGVFPVNMRYAGPKEAIFHAICRKNYGCTHFIVGRDHAGVGDYYGTYEAQEIFDQFKPEEIGIVPLKFEHAFYCTKCESMATAKTCPHGKEDHVFLSGTKVREMLSKGEKPPKEFTRAEVAEILMEYYMNK</sequence>
<accession>A9BFU2</accession>
<evidence type="ECO:0000255" key="1">
    <source>
        <dbReference type="HAMAP-Rule" id="MF_00066"/>
    </source>
</evidence>
<reference key="1">
    <citation type="submission" date="2007-11" db="EMBL/GenBank/DDBJ databases">
        <title>Complete sequence of Petroga mobilis SJ95.</title>
        <authorList>
            <consortium name="US DOE Joint Genome Institute"/>
            <person name="Copeland A."/>
            <person name="Lucas S."/>
            <person name="Lapidus A."/>
            <person name="Barry K."/>
            <person name="Glavina del Rio T."/>
            <person name="Dalin E."/>
            <person name="Tice H."/>
            <person name="Pitluck S."/>
            <person name="Meincke L."/>
            <person name="Brettin T."/>
            <person name="Bruce D."/>
            <person name="Detter J.C."/>
            <person name="Han C."/>
            <person name="Kuske C.R."/>
            <person name="Schmutz J."/>
            <person name="Larimer F."/>
            <person name="Land M."/>
            <person name="Hauser L."/>
            <person name="Kyrpides N."/>
            <person name="Mikhailova N."/>
            <person name="Noll K."/>
            <person name="Richardson P."/>
        </authorList>
    </citation>
    <scope>NUCLEOTIDE SEQUENCE [LARGE SCALE GENOMIC DNA]</scope>
    <source>
        <strain>DSM 10674 / SJ95</strain>
    </source>
</reference>
<comment type="catalytic activity">
    <reaction evidence="1">
        <text>sulfate + ATP + H(+) = adenosine 5'-phosphosulfate + diphosphate</text>
        <dbReference type="Rhea" id="RHEA:18133"/>
        <dbReference type="ChEBI" id="CHEBI:15378"/>
        <dbReference type="ChEBI" id="CHEBI:16189"/>
        <dbReference type="ChEBI" id="CHEBI:30616"/>
        <dbReference type="ChEBI" id="CHEBI:33019"/>
        <dbReference type="ChEBI" id="CHEBI:58243"/>
        <dbReference type="EC" id="2.7.7.4"/>
    </reaction>
</comment>
<comment type="pathway">
    <text evidence="1">Sulfur metabolism; hydrogen sulfide biosynthesis; sulfite from sulfate: step 1/3.</text>
</comment>
<comment type="similarity">
    <text evidence="1">Belongs to the sulfate adenylyltransferase family.</text>
</comment>
<organism>
    <name type="scientific">Petrotoga mobilis (strain DSM 10674 / SJ95)</name>
    <dbReference type="NCBI Taxonomy" id="403833"/>
    <lineage>
        <taxon>Bacteria</taxon>
        <taxon>Thermotogati</taxon>
        <taxon>Thermotogota</taxon>
        <taxon>Thermotogae</taxon>
        <taxon>Petrotogales</taxon>
        <taxon>Petrotogaceae</taxon>
        <taxon>Petrotoga</taxon>
    </lineage>
</organism>
<proteinExistence type="inferred from homology"/>
<gene>
    <name evidence="1" type="primary">sat</name>
    <name type="ordered locus">Pmob_0713</name>
</gene>
<protein>
    <recommendedName>
        <fullName evidence="1">Sulfate adenylyltransferase</fullName>
        <ecNumber evidence="1">2.7.7.4</ecNumber>
    </recommendedName>
    <alternativeName>
        <fullName evidence="1">ATP-sulfurylase</fullName>
    </alternativeName>
    <alternativeName>
        <fullName evidence="1">Sulfate adenylate transferase</fullName>
        <shortName evidence="1">SAT</shortName>
    </alternativeName>
</protein>
<name>SAT_PETMO</name>
<dbReference type="EC" id="2.7.7.4" evidence="1"/>
<dbReference type="EMBL" id="CP000879">
    <property type="protein sequence ID" value="ABX31438.1"/>
    <property type="molecule type" value="Genomic_DNA"/>
</dbReference>
<dbReference type="RefSeq" id="WP_012208541.1">
    <property type="nucleotide sequence ID" value="NC_010003.1"/>
</dbReference>
<dbReference type="SMR" id="A9BFU2"/>
<dbReference type="STRING" id="403833.Pmob_0713"/>
<dbReference type="KEGG" id="pmo:Pmob_0713"/>
<dbReference type="eggNOG" id="COG2046">
    <property type="taxonomic scope" value="Bacteria"/>
</dbReference>
<dbReference type="HOGENOM" id="CLU_022950_1_1_0"/>
<dbReference type="OrthoDB" id="9804504at2"/>
<dbReference type="UniPathway" id="UPA00140">
    <property type="reaction ID" value="UER00204"/>
</dbReference>
<dbReference type="Proteomes" id="UP000000789">
    <property type="component" value="Chromosome"/>
</dbReference>
<dbReference type="GO" id="GO:0005524">
    <property type="term" value="F:ATP binding"/>
    <property type="evidence" value="ECO:0007669"/>
    <property type="project" value="UniProtKB-KW"/>
</dbReference>
<dbReference type="GO" id="GO:0004781">
    <property type="term" value="F:sulfate adenylyltransferase (ATP) activity"/>
    <property type="evidence" value="ECO:0007669"/>
    <property type="project" value="UniProtKB-UniRule"/>
</dbReference>
<dbReference type="GO" id="GO:0070814">
    <property type="term" value="P:hydrogen sulfide biosynthetic process"/>
    <property type="evidence" value="ECO:0007669"/>
    <property type="project" value="UniProtKB-UniRule"/>
</dbReference>
<dbReference type="GO" id="GO:0000103">
    <property type="term" value="P:sulfate assimilation"/>
    <property type="evidence" value="ECO:0007669"/>
    <property type="project" value="UniProtKB-UniRule"/>
</dbReference>
<dbReference type="CDD" id="cd00517">
    <property type="entry name" value="ATPS"/>
    <property type="match status" value="1"/>
</dbReference>
<dbReference type="Gene3D" id="3.40.50.620">
    <property type="entry name" value="HUPs"/>
    <property type="match status" value="1"/>
</dbReference>
<dbReference type="Gene3D" id="3.10.400.10">
    <property type="entry name" value="Sulfate adenylyltransferase"/>
    <property type="match status" value="1"/>
</dbReference>
<dbReference type="HAMAP" id="MF_00066">
    <property type="entry name" value="Sulf_adenylyltr"/>
    <property type="match status" value="1"/>
</dbReference>
<dbReference type="InterPro" id="IPR025980">
    <property type="entry name" value="ATP-Sase_PUA-like_dom"/>
</dbReference>
<dbReference type="InterPro" id="IPR015947">
    <property type="entry name" value="PUA-like_sf"/>
</dbReference>
<dbReference type="InterPro" id="IPR014729">
    <property type="entry name" value="Rossmann-like_a/b/a_fold"/>
</dbReference>
<dbReference type="InterPro" id="IPR020792">
    <property type="entry name" value="SO4_adenylyltransferase_pro"/>
</dbReference>
<dbReference type="InterPro" id="IPR024951">
    <property type="entry name" value="Sulfurylase_cat_dom"/>
</dbReference>
<dbReference type="InterPro" id="IPR002650">
    <property type="entry name" value="Sulphate_adenylyltransferase"/>
</dbReference>
<dbReference type="NCBIfam" id="NF003166">
    <property type="entry name" value="PRK04149.1"/>
    <property type="match status" value="1"/>
</dbReference>
<dbReference type="NCBIfam" id="TIGR00339">
    <property type="entry name" value="sopT"/>
    <property type="match status" value="1"/>
</dbReference>
<dbReference type="PANTHER" id="PTHR43509">
    <property type="match status" value="1"/>
</dbReference>
<dbReference type="PANTHER" id="PTHR43509:SF1">
    <property type="entry name" value="SULFATE ADENYLYLTRANSFERASE"/>
    <property type="match status" value="1"/>
</dbReference>
<dbReference type="Pfam" id="PF01747">
    <property type="entry name" value="ATP-sulfurylase"/>
    <property type="match status" value="1"/>
</dbReference>
<dbReference type="Pfam" id="PF14306">
    <property type="entry name" value="PUA_2"/>
    <property type="match status" value="1"/>
</dbReference>
<dbReference type="SUPFAM" id="SSF52374">
    <property type="entry name" value="Nucleotidylyl transferase"/>
    <property type="match status" value="1"/>
</dbReference>
<dbReference type="SUPFAM" id="SSF88697">
    <property type="entry name" value="PUA domain-like"/>
    <property type="match status" value="1"/>
</dbReference>
<feature type="chain" id="PRO_1000075093" description="Sulfate adenylyltransferase">
    <location>
        <begin position="1"/>
        <end position="384"/>
    </location>
</feature>
<keyword id="KW-0067">ATP-binding</keyword>
<keyword id="KW-0547">Nucleotide-binding</keyword>
<keyword id="KW-0548">Nucleotidyltransferase</keyword>
<keyword id="KW-0808">Transferase</keyword>